<dbReference type="EC" id="3.1.3.77" evidence="1"/>
<dbReference type="EMBL" id="CH408078">
    <property type="protein sequence ID" value="EEQ38207.1"/>
    <property type="molecule type" value="Genomic_DNA"/>
</dbReference>
<dbReference type="RefSeq" id="XP_002616889.1">
    <property type="nucleotide sequence ID" value="XM_002616843.1"/>
</dbReference>
<dbReference type="SMR" id="C4Y3W1"/>
<dbReference type="FunCoup" id="C4Y3W1">
    <property type="interactions" value="630"/>
</dbReference>
<dbReference type="STRING" id="306902.C4Y3W1"/>
<dbReference type="GeneID" id="8498328"/>
<dbReference type="KEGG" id="clu:CLUG_02333"/>
<dbReference type="VEuPathDB" id="FungiDB:CLUG_02333"/>
<dbReference type="HOGENOM" id="CLU_023273_1_1_1"/>
<dbReference type="InParanoid" id="C4Y3W1"/>
<dbReference type="OMA" id="LQGMVWE"/>
<dbReference type="OrthoDB" id="86472at4891"/>
<dbReference type="UniPathway" id="UPA00904">
    <property type="reaction ID" value="UER00876"/>
</dbReference>
<dbReference type="UniPathway" id="UPA00904">
    <property type="reaction ID" value="UER00877"/>
</dbReference>
<dbReference type="Proteomes" id="UP000007703">
    <property type="component" value="Unassembled WGS sequence"/>
</dbReference>
<dbReference type="GO" id="GO:0005737">
    <property type="term" value="C:cytoplasm"/>
    <property type="evidence" value="ECO:0007669"/>
    <property type="project" value="UniProtKB-SubCell"/>
</dbReference>
<dbReference type="GO" id="GO:0005634">
    <property type="term" value="C:nucleus"/>
    <property type="evidence" value="ECO:0007669"/>
    <property type="project" value="UniProtKB-SubCell"/>
</dbReference>
<dbReference type="GO" id="GO:0043874">
    <property type="term" value="F:acireductone synthase activity"/>
    <property type="evidence" value="ECO:0007669"/>
    <property type="project" value="UniProtKB-EC"/>
</dbReference>
<dbReference type="GO" id="GO:0000287">
    <property type="term" value="F:magnesium ion binding"/>
    <property type="evidence" value="ECO:0007669"/>
    <property type="project" value="UniProtKB-UniRule"/>
</dbReference>
<dbReference type="GO" id="GO:0019509">
    <property type="term" value="P:L-methionine salvage from methylthioadenosine"/>
    <property type="evidence" value="ECO:0007669"/>
    <property type="project" value="UniProtKB-UniRule"/>
</dbReference>
<dbReference type="CDD" id="cd01629">
    <property type="entry name" value="HAD_EP"/>
    <property type="match status" value="1"/>
</dbReference>
<dbReference type="Gene3D" id="1.10.720.60">
    <property type="match status" value="1"/>
</dbReference>
<dbReference type="Gene3D" id="3.40.50.1000">
    <property type="entry name" value="HAD superfamily/HAD-like"/>
    <property type="match status" value="1"/>
</dbReference>
<dbReference type="HAMAP" id="MF_03117">
    <property type="entry name" value="Salvage_MtnC_euk"/>
    <property type="match status" value="1"/>
</dbReference>
<dbReference type="InterPro" id="IPR023943">
    <property type="entry name" value="Enolase-ppase_E1"/>
</dbReference>
<dbReference type="InterPro" id="IPR027511">
    <property type="entry name" value="ENOPH1_eukaryotes"/>
</dbReference>
<dbReference type="InterPro" id="IPR036412">
    <property type="entry name" value="HAD-like_sf"/>
</dbReference>
<dbReference type="InterPro" id="IPR023214">
    <property type="entry name" value="HAD_sf"/>
</dbReference>
<dbReference type="NCBIfam" id="TIGR01691">
    <property type="entry name" value="enolase-ppase"/>
    <property type="match status" value="1"/>
</dbReference>
<dbReference type="PANTHER" id="PTHR20371">
    <property type="entry name" value="ENOLASE-PHOSPHATASE E1"/>
    <property type="match status" value="1"/>
</dbReference>
<dbReference type="PANTHER" id="PTHR20371:SF1">
    <property type="entry name" value="ENOLASE-PHOSPHATASE E1"/>
    <property type="match status" value="1"/>
</dbReference>
<dbReference type="SFLD" id="SFLDG01133">
    <property type="entry name" value="C1.5.4:_Enolase-phosphatase_Li"/>
    <property type="match status" value="1"/>
</dbReference>
<dbReference type="SFLD" id="SFLDG01129">
    <property type="entry name" value="C1.5:_HAD__Beta-PGM__Phosphata"/>
    <property type="match status" value="1"/>
</dbReference>
<dbReference type="SUPFAM" id="SSF56784">
    <property type="entry name" value="HAD-like"/>
    <property type="match status" value="1"/>
</dbReference>
<comment type="function">
    <text evidence="1">Bifunctional enzyme that catalyzes the enolization of 2,3-diketo-5-methylthiopentyl-1-phosphate (DK-MTP-1-P) into the intermediate 2-hydroxy-3-keto-5-methylthiopentenyl-1-phosphate (HK-MTPenyl-1-P), which is then dephosphorylated to form the acireductone 1,2-dihydroxy-3-keto-5-methylthiopentene (DHK-MTPene).</text>
</comment>
<comment type="catalytic activity">
    <reaction evidence="1">
        <text>5-methylsulfanyl-2,3-dioxopentyl phosphate + H2O = 1,2-dihydroxy-5-(methylsulfanyl)pent-1-en-3-one + phosphate</text>
        <dbReference type="Rhea" id="RHEA:21700"/>
        <dbReference type="ChEBI" id="CHEBI:15377"/>
        <dbReference type="ChEBI" id="CHEBI:43474"/>
        <dbReference type="ChEBI" id="CHEBI:49252"/>
        <dbReference type="ChEBI" id="CHEBI:58828"/>
        <dbReference type="EC" id="3.1.3.77"/>
    </reaction>
</comment>
<comment type="cofactor">
    <cofactor evidence="1">
        <name>Mg(2+)</name>
        <dbReference type="ChEBI" id="CHEBI:18420"/>
    </cofactor>
    <text evidence="1">Binds 1 Mg(2+) ion per subunit.</text>
</comment>
<comment type="pathway">
    <text evidence="1">Amino-acid biosynthesis; L-methionine biosynthesis via salvage pathway; L-methionine from S-methyl-5-thio-alpha-D-ribose 1-phosphate: step 3/6.</text>
</comment>
<comment type="pathway">
    <text evidence="1">Amino-acid biosynthesis; L-methionine biosynthesis via salvage pathway; L-methionine from S-methyl-5-thio-alpha-D-ribose 1-phosphate: step 4/6.</text>
</comment>
<comment type="subunit">
    <text evidence="1">Monomer.</text>
</comment>
<comment type="subcellular location">
    <subcellularLocation>
        <location evidence="1">Cytoplasm</location>
    </subcellularLocation>
    <subcellularLocation>
        <location evidence="1">Nucleus</location>
    </subcellularLocation>
</comment>
<comment type="similarity">
    <text evidence="1">Belongs to the HAD-like hydrolase superfamily. MasA/MtnC family.</text>
</comment>
<organism>
    <name type="scientific">Clavispora lusitaniae (strain ATCC 42720)</name>
    <name type="common">Yeast</name>
    <name type="synonym">Candida lusitaniae</name>
    <dbReference type="NCBI Taxonomy" id="306902"/>
    <lineage>
        <taxon>Eukaryota</taxon>
        <taxon>Fungi</taxon>
        <taxon>Dikarya</taxon>
        <taxon>Ascomycota</taxon>
        <taxon>Saccharomycotina</taxon>
        <taxon>Pichiomycetes</taxon>
        <taxon>Metschnikowiaceae</taxon>
        <taxon>Clavispora</taxon>
    </lineage>
</organism>
<name>ENOPH_CLAL4</name>
<evidence type="ECO:0000255" key="1">
    <source>
        <dbReference type="HAMAP-Rule" id="MF_03117"/>
    </source>
</evidence>
<sequence>MSIALLDIEGTVCPITFVKDCLFPYFSKQYPSYLRDVSFPIDKSDGGLADVLAGFPKEAVASIDQLKNHIDDLVARDVKDPVLKSFQGLVWKEGYAKGDLKAPVYEDAIAFINRSKSVYIYSSGSVGAQKLLFSHVDVNGASVDLTPKLKGYFDITTAGFKQEKDSYLKIAADIGCDPADVIFYSDNVLEVKAALEAGMASKVVVRPGNAELSESDKKSYECISSFTAE</sequence>
<gene>
    <name evidence="1" type="primary">UTR4</name>
    <name type="ORF">CLUG_02333</name>
</gene>
<proteinExistence type="inferred from homology"/>
<keyword id="KW-0028">Amino-acid biosynthesis</keyword>
<keyword id="KW-0963">Cytoplasm</keyword>
<keyword id="KW-0378">Hydrolase</keyword>
<keyword id="KW-0460">Magnesium</keyword>
<keyword id="KW-0479">Metal-binding</keyword>
<keyword id="KW-0486">Methionine biosynthesis</keyword>
<keyword id="KW-0539">Nucleus</keyword>
<keyword id="KW-1185">Reference proteome</keyword>
<reference key="1">
    <citation type="journal article" date="2009" name="Nature">
        <title>Evolution of pathogenicity and sexual reproduction in eight Candida genomes.</title>
        <authorList>
            <person name="Butler G."/>
            <person name="Rasmussen M.D."/>
            <person name="Lin M.F."/>
            <person name="Santos M.A.S."/>
            <person name="Sakthikumar S."/>
            <person name="Munro C.A."/>
            <person name="Rheinbay E."/>
            <person name="Grabherr M."/>
            <person name="Forche A."/>
            <person name="Reedy J.L."/>
            <person name="Agrafioti I."/>
            <person name="Arnaud M.B."/>
            <person name="Bates S."/>
            <person name="Brown A.J.P."/>
            <person name="Brunke S."/>
            <person name="Costanzo M.C."/>
            <person name="Fitzpatrick D.A."/>
            <person name="de Groot P.W.J."/>
            <person name="Harris D."/>
            <person name="Hoyer L.L."/>
            <person name="Hube B."/>
            <person name="Klis F.M."/>
            <person name="Kodira C."/>
            <person name="Lennard N."/>
            <person name="Logue M.E."/>
            <person name="Martin R."/>
            <person name="Neiman A.M."/>
            <person name="Nikolaou E."/>
            <person name="Quail M.A."/>
            <person name="Quinn J."/>
            <person name="Santos M.C."/>
            <person name="Schmitzberger F.F."/>
            <person name="Sherlock G."/>
            <person name="Shah P."/>
            <person name="Silverstein K.A.T."/>
            <person name="Skrzypek M.S."/>
            <person name="Soll D."/>
            <person name="Staggs R."/>
            <person name="Stansfield I."/>
            <person name="Stumpf M.P.H."/>
            <person name="Sudbery P.E."/>
            <person name="Srikantha T."/>
            <person name="Zeng Q."/>
            <person name="Berman J."/>
            <person name="Berriman M."/>
            <person name="Heitman J."/>
            <person name="Gow N.A.R."/>
            <person name="Lorenz M.C."/>
            <person name="Birren B.W."/>
            <person name="Kellis M."/>
            <person name="Cuomo C.A."/>
        </authorList>
    </citation>
    <scope>NUCLEOTIDE SEQUENCE [LARGE SCALE GENOMIC DNA]</scope>
    <source>
        <strain>ATCC 42720</strain>
    </source>
</reference>
<feature type="chain" id="PRO_0000393998" description="Enolase-phosphatase E1">
    <location>
        <begin position="1"/>
        <end position="229"/>
    </location>
</feature>
<feature type="binding site" evidence="1">
    <location>
        <position position="7"/>
    </location>
    <ligand>
        <name>Mg(2+)</name>
        <dbReference type="ChEBI" id="CHEBI:18420"/>
    </ligand>
</feature>
<feature type="binding site" evidence="1">
    <location>
        <position position="9"/>
    </location>
    <ligand>
        <name>Mg(2+)</name>
        <dbReference type="ChEBI" id="CHEBI:18420"/>
    </ligand>
</feature>
<feature type="binding site" evidence="1">
    <location>
        <begin position="122"/>
        <end position="123"/>
    </location>
    <ligand>
        <name>substrate</name>
    </ligand>
</feature>
<feature type="binding site" evidence="1">
    <location>
        <position position="161"/>
    </location>
    <ligand>
        <name>substrate</name>
    </ligand>
</feature>
<feature type="binding site" evidence="1">
    <location>
        <position position="186"/>
    </location>
    <ligand>
        <name>Mg(2+)</name>
        <dbReference type="ChEBI" id="CHEBI:18420"/>
    </ligand>
</feature>
<protein>
    <recommendedName>
        <fullName evidence="1">Enolase-phosphatase E1</fullName>
        <ecNumber evidence="1">3.1.3.77</ecNumber>
    </recommendedName>
    <alternativeName>
        <fullName evidence="1">2,3-diketo-5-methylthio-1-phosphopentane phosphatase</fullName>
    </alternativeName>
</protein>
<accession>C4Y3W1</accession>